<sequence>MAGRTVTRVDLCEAVYQKVGLSRTESSAFVELVLKEITDCLERGETVKLSSFGSFLVRQKGQRIGRNPKTGTEVPISPRRVMVFKPSAILKQRINANGAMPMSTEESDENTAQSASGG</sequence>
<protein>
    <recommendedName>
        <fullName evidence="1">Integration host factor subunit alpha</fullName>
        <shortName evidence="1">IHF-alpha</shortName>
    </recommendedName>
</protein>
<feature type="chain" id="PRO_1000122158" description="Integration host factor subunit alpha">
    <location>
        <begin position="1"/>
        <end position="118"/>
    </location>
</feature>
<feature type="region of interest" description="Disordered" evidence="2">
    <location>
        <begin position="97"/>
        <end position="118"/>
    </location>
</feature>
<keyword id="KW-0233">DNA recombination</keyword>
<keyword id="KW-0238">DNA-binding</keyword>
<keyword id="KW-0804">Transcription</keyword>
<keyword id="KW-0805">Transcription regulation</keyword>
<keyword id="KW-0810">Translation regulation</keyword>
<reference key="1">
    <citation type="submission" date="2008-05" db="EMBL/GenBank/DDBJ databases">
        <title>Complete sequence of Rhodopseudomonas palustris TIE-1.</title>
        <authorList>
            <consortium name="US DOE Joint Genome Institute"/>
            <person name="Lucas S."/>
            <person name="Copeland A."/>
            <person name="Lapidus A."/>
            <person name="Glavina del Rio T."/>
            <person name="Dalin E."/>
            <person name="Tice H."/>
            <person name="Pitluck S."/>
            <person name="Chain P."/>
            <person name="Malfatti S."/>
            <person name="Shin M."/>
            <person name="Vergez L."/>
            <person name="Lang D."/>
            <person name="Schmutz J."/>
            <person name="Larimer F."/>
            <person name="Land M."/>
            <person name="Hauser L."/>
            <person name="Kyrpides N."/>
            <person name="Mikhailova N."/>
            <person name="Emerson D."/>
            <person name="Newman D.K."/>
            <person name="Roden E."/>
            <person name="Richardson P."/>
        </authorList>
    </citation>
    <scope>NUCLEOTIDE SEQUENCE [LARGE SCALE GENOMIC DNA]</scope>
    <source>
        <strain>TIE-1</strain>
    </source>
</reference>
<evidence type="ECO:0000255" key="1">
    <source>
        <dbReference type="HAMAP-Rule" id="MF_00380"/>
    </source>
</evidence>
<evidence type="ECO:0000256" key="2">
    <source>
        <dbReference type="SAM" id="MobiDB-lite"/>
    </source>
</evidence>
<comment type="function">
    <text evidence="1">This protein is one of the two subunits of integration host factor, a specific DNA-binding protein that functions in genetic recombination as well as in transcriptional and translational control.</text>
</comment>
<comment type="subunit">
    <text evidence="1">Heterodimer of an alpha and a beta chain.</text>
</comment>
<comment type="similarity">
    <text evidence="1">Belongs to the bacterial histone-like protein family.</text>
</comment>
<name>IHFA_RHOPT</name>
<accession>B3QJM1</accession>
<organism>
    <name type="scientific">Rhodopseudomonas palustris (strain TIE-1)</name>
    <dbReference type="NCBI Taxonomy" id="395960"/>
    <lineage>
        <taxon>Bacteria</taxon>
        <taxon>Pseudomonadati</taxon>
        <taxon>Pseudomonadota</taxon>
        <taxon>Alphaproteobacteria</taxon>
        <taxon>Hyphomicrobiales</taxon>
        <taxon>Nitrobacteraceae</taxon>
        <taxon>Rhodopseudomonas</taxon>
    </lineage>
</organism>
<dbReference type="EMBL" id="CP001096">
    <property type="protein sequence ID" value="ACF01527.1"/>
    <property type="molecule type" value="Genomic_DNA"/>
</dbReference>
<dbReference type="RefSeq" id="WP_011158293.1">
    <property type="nucleotide sequence ID" value="NC_011004.1"/>
</dbReference>
<dbReference type="SMR" id="B3QJM1"/>
<dbReference type="KEGG" id="rpt:Rpal_3021"/>
<dbReference type="HOGENOM" id="CLU_105066_1_1_5"/>
<dbReference type="OrthoDB" id="9797747at2"/>
<dbReference type="Proteomes" id="UP000001725">
    <property type="component" value="Chromosome"/>
</dbReference>
<dbReference type="GO" id="GO:0005829">
    <property type="term" value="C:cytosol"/>
    <property type="evidence" value="ECO:0007669"/>
    <property type="project" value="TreeGrafter"/>
</dbReference>
<dbReference type="GO" id="GO:0003677">
    <property type="term" value="F:DNA binding"/>
    <property type="evidence" value="ECO:0007669"/>
    <property type="project" value="UniProtKB-UniRule"/>
</dbReference>
<dbReference type="GO" id="GO:0030527">
    <property type="term" value="F:structural constituent of chromatin"/>
    <property type="evidence" value="ECO:0007669"/>
    <property type="project" value="InterPro"/>
</dbReference>
<dbReference type="GO" id="GO:0006310">
    <property type="term" value="P:DNA recombination"/>
    <property type="evidence" value="ECO:0007669"/>
    <property type="project" value="UniProtKB-UniRule"/>
</dbReference>
<dbReference type="GO" id="GO:0009893">
    <property type="term" value="P:positive regulation of metabolic process"/>
    <property type="evidence" value="ECO:0007669"/>
    <property type="project" value="UniProtKB-ARBA"/>
</dbReference>
<dbReference type="GO" id="GO:0006355">
    <property type="term" value="P:regulation of DNA-templated transcription"/>
    <property type="evidence" value="ECO:0007669"/>
    <property type="project" value="UniProtKB-UniRule"/>
</dbReference>
<dbReference type="GO" id="GO:0006417">
    <property type="term" value="P:regulation of translation"/>
    <property type="evidence" value="ECO:0007669"/>
    <property type="project" value="UniProtKB-UniRule"/>
</dbReference>
<dbReference type="CDD" id="cd13835">
    <property type="entry name" value="IHF_A"/>
    <property type="match status" value="1"/>
</dbReference>
<dbReference type="FunFam" id="4.10.520.10:FF:000010">
    <property type="entry name" value="Integration host factor subunit alpha"/>
    <property type="match status" value="1"/>
</dbReference>
<dbReference type="Gene3D" id="4.10.520.10">
    <property type="entry name" value="IHF-like DNA-binding proteins"/>
    <property type="match status" value="1"/>
</dbReference>
<dbReference type="HAMAP" id="MF_00380">
    <property type="entry name" value="IHF_alpha"/>
    <property type="match status" value="1"/>
</dbReference>
<dbReference type="InterPro" id="IPR000119">
    <property type="entry name" value="Hist_DNA-bd"/>
</dbReference>
<dbReference type="InterPro" id="IPR020816">
    <property type="entry name" value="Histone-like_DNA-bd_CS"/>
</dbReference>
<dbReference type="InterPro" id="IPR010992">
    <property type="entry name" value="IHF-like_DNA-bd_dom_sf"/>
</dbReference>
<dbReference type="InterPro" id="IPR005684">
    <property type="entry name" value="IHF_alpha"/>
</dbReference>
<dbReference type="NCBIfam" id="TIGR00987">
    <property type="entry name" value="himA"/>
    <property type="match status" value="1"/>
</dbReference>
<dbReference type="NCBIfam" id="NF001401">
    <property type="entry name" value="PRK00285.1"/>
    <property type="match status" value="1"/>
</dbReference>
<dbReference type="PANTHER" id="PTHR33175">
    <property type="entry name" value="DNA-BINDING PROTEIN HU"/>
    <property type="match status" value="1"/>
</dbReference>
<dbReference type="PANTHER" id="PTHR33175:SF2">
    <property type="entry name" value="INTEGRATION HOST FACTOR SUBUNIT ALPHA"/>
    <property type="match status" value="1"/>
</dbReference>
<dbReference type="Pfam" id="PF00216">
    <property type="entry name" value="Bac_DNA_binding"/>
    <property type="match status" value="1"/>
</dbReference>
<dbReference type="PRINTS" id="PR01727">
    <property type="entry name" value="DNABINDINGHU"/>
</dbReference>
<dbReference type="SMART" id="SM00411">
    <property type="entry name" value="BHL"/>
    <property type="match status" value="1"/>
</dbReference>
<dbReference type="SUPFAM" id="SSF47729">
    <property type="entry name" value="IHF-like DNA-binding proteins"/>
    <property type="match status" value="1"/>
</dbReference>
<dbReference type="PROSITE" id="PS00045">
    <property type="entry name" value="HISTONE_LIKE"/>
    <property type="match status" value="1"/>
</dbReference>
<proteinExistence type="inferred from homology"/>
<gene>
    <name evidence="1" type="primary">ihfA</name>
    <name evidence="1" type="synonym">himA</name>
    <name type="ordered locus">Rpal_3021</name>
</gene>